<sequence length="400" mass="46077">MKAICVNFGPQHPAAHGVLRLILQLNGEVVEKMDIHIGLLHRGSEKLMETKPYLQSMPYFDRLDYVSMMVQEHAYCLAIEALLNTTNYTANFVLVRTMFDELTRILNHMLAIACHALDIGSMSSIFWAFEEREKIMEFYERVCGRRMHAAFYRPNEVNLNFLSVKLLTDILEFNNNCLTTLSEMHNILTYNKIWKQRLVNIGSISYKDCLDFGLTGVMARSTGIKRDLRMDAFDTYANYYYLNFRSYTGQAGDSYDRFLIRMNEMSESINIISQAIFKLTTSKNTCSPASILKALNKKKFISQTYKNEYSSMEKLITHFKYWSEGFKIQSNWTYQAVESPKGEFGVTLVSDGSNKPYRCKVRSPAYHHLQVLPKMSKGHLLADLSALIGTIDIVFGEIDR</sequence>
<organism>
    <name type="scientific">Paramecium tetraurelia</name>
    <dbReference type="NCBI Taxonomy" id="5888"/>
    <lineage>
        <taxon>Eukaryota</taxon>
        <taxon>Sar</taxon>
        <taxon>Alveolata</taxon>
        <taxon>Ciliophora</taxon>
        <taxon>Intramacronucleata</taxon>
        <taxon>Oligohymenophorea</taxon>
        <taxon>Peniculida</taxon>
        <taxon>Parameciidae</taxon>
        <taxon>Paramecium</taxon>
    </lineage>
</organism>
<keyword id="KW-0249">Electron transport</keyword>
<keyword id="KW-0496">Mitochondrion</keyword>
<keyword id="KW-0520">NAD</keyword>
<keyword id="KW-0560">Oxidoreductase</keyword>
<keyword id="KW-0679">Respiratory chain</keyword>
<keyword id="KW-1278">Translocase</keyword>
<keyword id="KW-0813">Transport</keyword>
<keyword id="KW-0830">Ubiquinone</keyword>
<accession>P15689</accession>
<proteinExistence type="inferred from homology"/>
<dbReference type="EC" id="7.1.1.2"/>
<dbReference type="EMBL" id="X15917">
    <property type="protein sequence ID" value="CAA34042.1"/>
    <property type="molecule type" value="Genomic_DNA"/>
</dbReference>
<dbReference type="EMBL" id="M26930">
    <property type="protein sequence ID" value="AAA79254.1"/>
    <property type="molecule type" value="Genomic_DNA"/>
</dbReference>
<dbReference type="PIR" id="S07733">
    <property type="entry name" value="S07733"/>
</dbReference>
<dbReference type="SMR" id="P15689"/>
<dbReference type="GO" id="GO:0005739">
    <property type="term" value="C:mitochondrion"/>
    <property type="evidence" value="ECO:0007669"/>
    <property type="project" value="UniProtKB-SubCell"/>
</dbReference>
<dbReference type="GO" id="GO:0051287">
    <property type="term" value="F:NAD binding"/>
    <property type="evidence" value="ECO:0007669"/>
    <property type="project" value="InterPro"/>
</dbReference>
<dbReference type="GO" id="GO:0008137">
    <property type="term" value="F:NADH dehydrogenase (ubiquinone) activity"/>
    <property type="evidence" value="ECO:0007669"/>
    <property type="project" value="UniProtKB-EC"/>
</dbReference>
<dbReference type="GO" id="GO:0048038">
    <property type="term" value="F:quinone binding"/>
    <property type="evidence" value="ECO:0007669"/>
    <property type="project" value="InterPro"/>
</dbReference>
<dbReference type="Gene3D" id="1.10.645.10">
    <property type="entry name" value="Cytochrome-c3 Hydrogenase, chain B"/>
    <property type="match status" value="1"/>
</dbReference>
<dbReference type="InterPro" id="IPR001135">
    <property type="entry name" value="NADH_Q_OxRdtase_suD"/>
</dbReference>
<dbReference type="InterPro" id="IPR014029">
    <property type="entry name" value="NADH_UbQ_OxRdtase_49kDa_CS"/>
</dbReference>
<dbReference type="InterPro" id="IPR022885">
    <property type="entry name" value="NDH1_su_D/H"/>
</dbReference>
<dbReference type="InterPro" id="IPR029014">
    <property type="entry name" value="NiFe-Hase_large"/>
</dbReference>
<dbReference type="NCBIfam" id="NF004739">
    <property type="entry name" value="PRK06075.1"/>
    <property type="match status" value="1"/>
</dbReference>
<dbReference type="PANTHER" id="PTHR11993:SF10">
    <property type="entry name" value="NADH DEHYDROGENASE [UBIQUINONE] IRON-SULFUR PROTEIN 2, MITOCHONDRIAL"/>
    <property type="match status" value="1"/>
</dbReference>
<dbReference type="PANTHER" id="PTHR11993">
    <property type="entry name" value="NADH-UBIQUINONE OXIDOREDUCTASE 49 KDA SUBUNIT"/>
    <property type="match status" value="1"/>
</dbReference>
<dbReference type="Pfam" id="PF00346">
    <property type="entry name" value="Complex1_49kDa"/>
    <property type="match status" value="1"/>
</dbReference>
<dbReference type="SUPFAM" id="SSF56762">
    <property type="entry name" value="HydB/Nqo4-like"/>
    <property type="match status" value="1"/>
</dbReference>
<dbReference type="PROSITE" id="PS00535">
    <property type="entry name" value="COMPLEX1_49K"/>
    <property type="match status" value="1"/>
</dbReference>
<name>NDUS2_PARTE</name>
<reference key="1">
    <citation type="journal article" date="1990" name="Nucleic Acids Res.">
        <title>Nucleotide sequence of the mitochondrial genome of Paramecium.</title>
        <authorList>
            <person name="Pritchard A.E."/>
            <person name="Seilhamer J.J."/>
            <person name="Mahalingam R."/>
            <person name="Sable C.L."/>
            <person name="Venuti S.E."/>
            <person name="Cummings D.J."/>
        </authorList>
    </citation>
    <scope>NUCLEOTIDE SEQUENCE [GENOMIC DNA]</scope>
    <source>
        <strain>Stock 51</strain>
    </source>
</reference>
<reference key="2">
    <citation type="journal article" date="1989" name="Gene">
        <title>An unusual region of Paramecium mitochondrial DNA containing chloroplast-like genes.</title>
        <authorList>
            <person name="Pritchard A.E."/>
            <person name="Venuti S.E."/>
            <person name="Ghalambor M.A."/>
            <person name="Sable C.L."/>
            <person name="Cummings D.J."/>
        </authorList>
    </citation>
    <scope>NUCLEOTIDE SEQUENCE [GENOMIC DNA]</scope>
</reference>
<evidence type="ECO:0000250" key="1"/>
<evidence type="ECO:0000305" key="2"/>
<comment type="function">
    <text evidence="1">Core subunit of the mitochondrial membrane respiratory chain NADH dehydrogenase (Complex I) that is believed to belong to the minimal assembly required for catalysis. Complex I functions in the transfer of electrons from NADH to the respiratory chain. The immediate electron acceptor for the enzyme is believed to be ubiquinone (By similarity). Component of the iron-sulfur (IP) fragment of the enzyme. Component of the iron-sulfur (IP) fragment of the enzyme.</text>
</comment>
<comment type="catalytic activity">
    <reaction>
        <text>a ubiquinone + NADH + 5 H(+)(in) = a ubiquinol + NAD(+) + 4 H(+)(out)</text>
        <dbReference type="Rhea" id="RHEA:29091"/>
        <dbReference type="Rhea" id="RHEA-COMP:9565"/>
        <dbReference type="Rhea" id="RHEA-COMP:9566"/>
        <dbReference type="ChEBI" id="CHEBI:15378"/>
        <dbReference type="ChEBI" id="CHEBI:16389"/>
        <dbReference type="ChEBI" id="CHEBI:17976"/>
        <dbReference type="ChEBI" id="CHEBI:57540"/>
        <dbReference type="ChEBI" id="CHEBI:57945"/>
        <dbReference type="EC" id="7.1.1.2"/>
    </reaction>
</comment>
<comment type="subcellular location">
    <subcellularLocation>
        <location>Mitochondrion</location>
    </subcellularLocation>
</comment>
<comment type="similarity">
    <text evidence="2">Belongs to the complex I 49 kDa subunit family.</text>
</comment>
<protein>
    <recommendedName>
        <fullName>NADH-ubiquinone oxidoreductase 49 kDa subunit</fullName>
        <ecNumber>7.1.1.2</ecNumber>
    </recommendedName>
    <alternativeName>
        <fullName>NADH dehydrogenase subunit 7</fullName>
    </alternativeName>
</protein>
<geneLocation type="mitochondrion"/>
<feature type="chain" id="PRO_0000118590" description="NADH-ubiquinone oxidoreductase 49 kDa subunit">
    <location>
        <begin position="1"/>
        <end position="400"/>
    </location>
</feature>
<gene>
    <name type="primary">NAD7</name>
</gene>